<sequence length="179" mass="20780">MKQFLDFLPLVVFFAFYKIYDIYAATAALIVATAIVLIYSWVRFRKVEKMALITFVLVVVFGGLTLFFHNDEFIKWKVTVIYALFAGALLVSQWVMKKPLIQRMLGKELTLPQSVWSKLNLAWAVFFILCGLANIYIAFWLPQNIWVNFKVFGLTALTLIFTLLSGIYIYRHMPQEDKS</sequence>
<proteinExistence type="inferred from homology"/>
<feature type="chain" id="PRO_1000118579" description="Inner membrane-spanning protein YciB">
    <location>
        <begin position="1"/>
        <end position="179"/>
    </location>
</feature>
<feature type="transmembrane region" description="Helical" evidence="1">
    <location>
        <begin position="22"/>
        <end position="42"/>
    </location>
</feature>
<feature type="transmembrane region" description="Helical" evidence="1">
    <location>
        <begin position="50"/>
        <end position="70"/>
    </location>
</feature>
<feature type="transmembrane region" description="Helical" evidence="1">
    <location>
        <begin position="76"/>
        <end position="96"/>
    </location>
</feature>
<feature type="transmembrane region" description="Helical" evidence="1">
    <location>
        <begin position="121"/>
        <end position="141"/>
    </location>
</feature>
<feature type="transmembrane region" description="Helical" evidence="1">
    <location>
        <begin position="149"/>
        <end position="169"/>
    </location>
</feature>
<name>YCIB_ECO7I</name>
<gene>
    <name evidence="1" type="primary">yciB</name>
    <name type="ordered locus">ECIAI39_1591</name>
</gene>
<organism>
    <name type="scientific">Escherichia coli O7:K1 (strain IAI39 / ExPEC)</name>
    <dbReference type="NCBI Taxonomy" id="585057"/>
    <lineage>
        <taxon>Bacteria</taxon>
        <taxon>Pseudomonadati</taxon>
        <taxon>Pseudomonadota</taxon>
        <taxon>Gammaproteobacteria</taxon>
        <taxon>Enterobacterales</taxon>
        <taxon>Enterobacteriaceae</taxon>
        <taxon>Escherichia</taxon>
    </lineage>
</organism>
<evidence type="ECO:0000255" key="1">
    <source>
        <dbReference type="HAMAP-Rule" id="MF_00189"/>
    </source>
</evidence>
<reference key="1">
    <citation type="journal article" date="2009" name="PLoS Genet.">
        <title>Organised genome dynamics in the Escherichia coli species results in highly diverse adaptive paths.</title>
        <authorList>
            <person name="Touchon M."/>
            <person name="Hoede C."/>
            <person name="Tenaillon O."/>
            <person name="Barbe V."/>
            <person name="Baeriswyl S."/>
            <person name="Bidet P."/>
            <person name="Bingen E."/>
            <person name="Bonacorsi S."/>
            <person name="Bouchier C."/>
            <person name="Bouvet O."/>
            <person name="Calteau A."/>
            <person name="Chiapello H."/>
            <person name="Clermont O."/>
            <person name="Cruveiller S."/>
            <person name="Danchin A."/>
            <person name="Diard M."/>
            <person name="Dossat C."/>
            <person name="Karoui M.E."/>
            <person name="Frapy E."/>
            <person name="Garry L."/>
            <person name="Ghigo J.M."/>
            <person name="Gilles A.M."/>
            <person name="Johnson J."/>
            <person name="Le Bouguenec C."/>
            <person name="Lescat M."/>
            <person name="Mangenot S."/>
            <person name="Martinez-Jehanne V."/>
            <person name="Matic I."/>
            <person name="Nassif X."/>
            <person name="Oztas S."/>
            <person name="Petit M.A."/>
            <person name="Pichon C."/>
            <person name="Rouy Z."/>
            <person name="Ruf C.S."/>
            <person name="Schneider D."/>
            <person name="Tourret J."/>
            <person name="Vacherie B."/>
            <person name="Vallenet D."/>
            <person name="Medigue C."/>
            <person name="Rocha E.P.C."/>
            <person name="Denamur E."/>
        </authorList>
    </citation>
    <scope>NUCLEOTIDE SEQUENCE [LARGE SCALE GENOMIC DNA]</scope>
    <source>
        <strain>IAI39 / ExPEC</strain>
    </source>
</reference>
<keyword id="KW-0997">Cell inner membrane</keyword>
<keyword id="KW-1003">Cell membrane</keyword>
<keyword id="KW-0472">Membrane</keyword>
<keyword id="KW-0812">Transmembrane</keyword>
<keyword id="KW-1133">Transmembrane helix</keyword>
<accession>B7NVM4</accession>
<dbReference type="EMBL" id="CU928164">
    <property type="protein sequence ID" value="CAR17722.1"/>
    <property type="molecule type" value="Genomic_DNA"/>
</dbReference>
<dbReference type="RefSeq" id="WP_000808672.1">
    <property type="nucleotide sequence ID" value="NC_011750.1"/>
</dbReference>
<dbReference type="RefSeq" id="YP_002407590.1">
    <property type="nucleotide sequence ID" value="NC_011750.1"/>
</dbReference>
<dbReference type="STRING" id="585057.ECIAI39_1591"/>
<dbReference type="KEGG" id="ect:ECIAI39_1591"/>
<dbReference type="PATRIC" id="fig|585057.6.peg.1661"/>
<dbReference type="HOGENOM" id="CLU_089554_2_0_6"/>
<dbReference type="Proteomes" id="UP000000749">
    <property type="component" value="Chromosome"/>
</dbReference>
<dbReference type="GO" id="GO:0005886">
    <property type="term" value="C:plasma membrane"/>
    <property type="evidence" value="ECO:0007669"/>
    <property type="project" value="UniProtKB-SubCell"/>
</dbReference>
<dbReference type="HAMAP" id="MF_00189">
    <property type="entry name" value="YciB"/>
    <property type="match status" value="1"/>
</dbReference>
<dbReference type="InterPro" id="IPR006008">
    <property type="entry name" value="YciB"/>
</dbReference>
<dbReference type="NCBIfam" id="TIGR00997">
    <property type="entry name" value="ispZ"/>
    <property type="match status" value="1"/>
</dbReference>
<dbReference type="NCBIfam" id="NF001324">
    <property type="entry name" value="PRK00259.1-2"/>
    <property type="match status" value="1"/>
</dbReference>
<dbReference type="NCBIfam" id="NF001325">
    <property type="entry name" value="PRK00259.1-3"/>
    <property type="match status" value="1"/>
</dbReference>
<dbReference type="NCBIfam" id="NF001326">
    <property type="entry name" value="PRK00259.1-4"/>
    <property type="match status" value="1"/>
</dbReference>
<dbReference type="PANTHER" id="PTHR36917:SF1">
    <property type="entry name" value="INNER MEMBRANE-SPANNING PROTEIN YCIB"/>
    <property type="match status" value="1"/>
</dbReference>
<dbReference type="PANTHER" id="PTHR36917">
    <property type="entry name" value="INTRACELLULAR SEPTATION PROTEIN A-RELATED"/>
    <property type="match status" value="1"/>
</dbReference>
<dbReference type="Pfam" id="PF04279">
    <property type="entry name" value="IspA"/>
    <property type="match status" value="1"/>
</dbReference>
<protein>
    <recommendedName>
        <fullName evidence="1">Inner membrane-spanning protein YciB</fullName>
    </recommendedName>
</protein>
<comment type="function">
    <text evidence="1">Plays a role in cell envelope biogenesis, maintenance of cell envelope integrity and membrane homeostasis.</text>
</comment>
<comment type="subcellular location">
    <subcellularLocation>
        <location evidence="1">Cell inner membrane</location>
        <topology evidence="1">Multi-pass membrane protein</topology>
    </subcellularLocation>
</comment>
<comment type="similarity">
    <text evidence="1">Belongs to the YciB family.</text>
</comment>